<organism>
    <name type="scientific">Myxococcus xanthus (strain DK1622)</name>
    <dbReference type="NCBI Taxonomy" id="246197"/>
    <lineage>
        <taxon>Bacteria</taxon>
        <taxon>Pseudomonadati</taxon>
        <taxon>Myxococcota</taxon>
        <taxon>Myxococcia</taxon>
        <taxon>Myxococcales</taxon>
        <taxon>Cystobacterineae</taxon>
        <taxon>Myxococcaceae</taxon>
        <taxon>Myxococcus</taxon>
    </lineage>
</organism>
<reference key="1">
    <citation type="journal article" date="2006" name="Proc. Natl. Acad. Sci. U.S.A.">
        <title>Evolution of sensory complexity recorded in a myxobacterial genome.</title>
        <authorList>
            <person name="Goldman B.S."/>
            <person name="Nierman W.C."/>
            <person name="Kaiser D."/>
            <person name="Slater S.C."/>
            <person name="Durkin A.S."/>
            <person name="Eisen J.A."/>
            <person name="Ronning C.M."/>
            <person name="Barbazuk W.B."/>
            <person name="Blanchard M."/>
            <person name="Field C."/>
            <person name="Halling C."/>
            <person name="Hinkle G."/>
            <person name="Iartchuk O."/>
            <person name="Kim H.S."/>
            <person name="Mackenzie C."/>
            <person name="Madupu R."/>
            <person name="Miller N."/>
            <person name="Shvartsbeyn A."/>
            <person name="Sullivan S.A."/>
            <person name="Vaudin M."/>
            <person name="Wiegand R."/>
            <person name="Kaplan H.B."/>
        </authorList>
    </citation>
    <scope>NUCLEOTIDE SEQUENCE [LARGE SCALE GENOMIC DNA]</scope>
    <source>
        <strain>DK1622</strain>
    </source>
</reference>
<feature type="chain" id="PRO_0000252180" description="UPF0386 protein MXAN_1729">
    <location>
        <begin position="1"/>
        <end position="85"/>
    </location>
</feature>
<gene>
    <name type="ordered locus">MXAN_1729</name>
</gene>
<sequence length="85" mass="9500">MNVSRKELRVLNVLAQGGRILKHKDENGRLTHVACVTPEGWQLSLCTLEVFQQLKRRKLISSVKGGPYLITRLGLQALCGSSKTR</sequence>
<proteinExistence type="inferred from homology"/>
<keyword id="KW-1185">Reference proteome</keyword>
<comment type="similarity">
    <text evidence="1">Belongs to the UPF0386 family.</text>
</comment>
<comment type="sequence caution" evidence="2">
    <conflict type="erroneous initiation">
        <sequence resource="EMBL-CDS" id="ABF87644"/>
    </conflict>
</comment>
<name>Y1729_MYXXD</name>
<dbReference type="EMBL" id="CP000113">
    <property type="protein sequence ID" value="ABF87644.1"/>
    <property type="status" value="ALT_INIT"/>
    <property type="molecule type" value="Genomic_DNA"/>
</dbReference>
<dbReference type="RefSeq" id="WP_020477688.1">
    <property type="nucleotide sequence ID" value="NC_008095.1"/>
</dbReference>
<dbReference type="STRING" id="246197.MXAN_1729"/>
<dbReference type="EnsemblBacteria" id="ABF87644">
    <property type="protein sequence ID" value="ABF87644"/>
    <property type="gene ID" value="MXAN_1729"/>
</dbReference>
<dbReference type="GeneID" id="41359164"/>
<dbReference type="KEGG" id="mxa:MXAN_1729"/>
<dbReference type="eggNOG" id="COG3811">
    <property type="taxonomic scope" value="Bacteria"/>
</dbReference>
<dbReference type="HOGENOM" id="CLU_164736_0_0_7"/>
<dbReference type="OrthoDB" id="7204880at2"/>
<dbReference type="Proteomes" id="UP000002402">
    <property type="component" value="Chromosome"/>
</dbReference>
<dbReference type="HAMAP" id="MF_00827">
    <property type="entry name" value="UPF0386"/>
    <property type="match status" value="1"/>
</dbReference>
<dbReference type="InterPro" id="IPR018654">
    <property type="entry name" value="YjhX_toxin"/>
</dbReference>
<dbReference type="NCBIfam" id="NF010240">
    <property type="entry name" value="PRK13687.1"/>
    <property type="match status" value="1"/>
</dbReference>
<dbReference type="Pfam" id="PF09857">
    <property type="entry name" value="YjhX_toxin"/>
    <property type="match status" value="1"/>
</dbReference>
<accession>Q1DBJ3</accession>
<protein>
    <recommendedName>
        <fullName evidence="1">UPF0386 protein MXAN_1729</fullName>
    </recommendedName>
</protein>
<evidence type="ECO:0000255" key="1">
    <source>
        <dbReference type="HAMAP-Rule" id="MF_00827"/>
    </source>
</evidence>
<evidence type="ECO:0000305" key="2"/>